<evidence type="ECO:0000255" key="1">
    <source>
        <dbReference type="HAMAP-Rule" id="MF_01007"/>
    </source>
</evidence>
<evidence type="ECO:0000256" key="2">
    <source>
        <dbReference type="SAM" id="MobiDB-lite"/>
    </source>
</evidence>
<sequence length="325" mass="35045">MTDLPRDPRHDPVLLDEVIAALAIAPGERHVDATFGAGGYTRAMLAAGAEVIACDRDPDAIAGGEALVAEADGRLTLIHGRFGEIDRLLAERGIDAVDGITFDIGVSSMQLDQGERGFSFQKDGPLDMRMAQEGESAADWLNRADEYEIADVLYHYGDERQSRRVARAIVAARPLTRTSELASVVRKALRHPPGAPKDPATKSFQAIRIHINRELDELVAGLAAAERVLRPGGRLAVVSFHSTEDRIVKHFLRERSGGDAAGSRHRPAPTAAARAATFETPARKVRPGKAEEARNPRARSATLRSAVRTAAPAWPGNSMKEAMSC</sequence>
<feature type="chain" id="PRO_0000387133" description="Ribosomal RNA small subunit methyltransferase H">
    <location>
        <begin position="1"/>
        <end position="325"/>
    </location>
</feature>
<feature type="region of interest" description="Disordered" evidence="2">
    <location>
        <begin position="256"/>
        <end position="275"/>
    </location>
</feature>
<feature type="region of interest" description="Disordered" evidence="2">
    <location>
        <begin position="281"/>
        <end position="307"/>
    </location>
</feature>
<feature type="binding site" evidence="1">
    <location>
        <begin position="38"/>
        <end position="40"/>
    </location>
    <ligand>
        <name>S-adenosyl-L-methionine</name>
        <dbReference type="ChEBI" id="CHEBI:59789"/>
    </ligand>
</feature>
<feature type="binding site" evidence="1">
    <location>
        <position position="55"/>
    </location>
    <ligand>
        <name>S-adenosyl-L-methionine</name>
        <dbReference type="ChEBI" id="CHEBI:59789"/>
    </ligand>
</feature>
<feature type="binding site" evidence="1">
    <location>
        <position position="82"/>
    </location>
    <ligand>
        <name>S-adenosyl-L-methionine</name>
        <dbReference type="ChEBI" id="CHEBI:59789"/>
    </ligand>
</feature>
<feature type="binding site" evidence="1">
    <location>
        <position position="103"/>
    </location>
    <ligand>
        <name>S-adenosyl-L-methionine</name>
        <dbReference type="ChEBI" id="CHEBI:59789"/>
    </ligand>
</feature>
<feature type="binding site" evidence="1">
    <location>
        <position position="110"/>
    </location>
    <ligand>
        <name>S-adenosyl-L-methionine</name>
        <dbReference type="ChEBI" id="CHEBI:59789"/>
    </ligand>
</feature>
<gene>
    <name evidence="1" type="primary">rsmH</name>
    <name type="synonym">mraW</name>
    <name type="ordered locus">Sala_1889</name>
</gene>
<comment type="function">
    <text evidence="1">Specifically methylates the N4 position of cytidine in position 1402 (C1402) of 16S rRNA.</text>
</comment>
<comment type="catalytic activity">
    <reaction evidence="1">
        <text>cytidine(1402) in 16S rRNA + S-adenosyl-L-methionine = N(4)-methylcytidine(1402) in 16S rRNA + S-adenosyl-L-homocysteine + H(+)</text>
        <dbReference type="Rhea" id="RHEA:42928"/>
        <dbReference type="Rhea" id="RHEA-COMP:10286"/>
        <dbReference type="Rhea" id="RHEA-COMP:10287"/>
        <dbReference type="ChEBI" id="CHEBI:15378"/>
        <dbReference type="ChEBI" id="CHEBI:57856"/>
        <dbReference type="ChEBI" id="CHEBI:59789"/>
        <dbReference type="ChEBI" id="CHEBI:74506"/>
        <dbReference type="ChEBI" id="CHEBI:82748"/>
        <dbReference type="EC" id="2.1.1.199"/>
    </reaction>
</comment>
<comment type="subcellular location">
    <subcellularLocation>
        <location evidence="1">Cytoplasm</location>
    </subcellularLocation>
</comment>
<comment type="similarity">
    <text evidence="1">Belongs to the methyltransferase superfamily. RsmH family.</text>
</comment>
<accession>Q1GRX1</accession>
<reference key="1">
    <citation type="journal article" date="2009" name="Proc. Natl. Acad. Sci. U.S.A.">
        <title>The genomic basis of trophic strategy in marine bacteria.</title>
        <authorList>
            <person name="Lauro F.M."/>
            <person name="McDougald D."/>
            <person name="Thomas T."/>
            <person name="Williams T.J."/>
            <person name="Egan S."/>
            <person name="Rice S."/>
            <person name="DeMaere M.Z."/>
            <person name="Ting L."/>
            <person name="Ertan H."/>
            <person name="Johnson J."/>
            <person name="Ferriera S."/>
            <person name="Lapidus A."/>
            <person name="Anderson I."/>
            <person name="Kyrpides N."/>
            <person name="Munk A.C."/>
            <person name="Detter C."/>
            <person name="Han C.S."/>
            <person name="Brown M.V."/>
            <person name="Robb F.T."/>
            <person name="Kjelleberg S."/>
            <person name="Cavicchioli R."/>
        </authorList>
    </citation>
    <scope>NUCLEOTIDE SEQUENCE [LARGE SCALE GENOMIC DNA]</scope>
    <source>
        <strain>DSM 13593 / LMG 18877 / RB2256</strain>
    </source>
</reference>
<protein>
    <recommendedName>
        <fullName evidence="1">Ribosomal RNA small subunit methyltransferase H</fullName>
        <ecNumber evidence="1">2.1.1.199</ecNumber>
    </recommendedName>
    <alternativeName>
        <fullName evidence="1">16S rRNA m(4)C1402 methyltransferase</fullName>
    </alternativeName>
    <alternativeName>
        <fullName evidence="1">rRNA (cytosine-N(4)-)-methyltransferase RsmH</fullName>
    </alternativeName>
</protein>
<name>RSMH_SPHAL</name>
<dbReference type="EC" id="2.1.1.199" evidence="1"/>
<dbReference type="EMBL" id="CP000356">
    <property type="protein sequence ID" value="ABF53601.1"/>
    <property type="molecule type" value="Genomic_DNA"/>
</dbReference>
<dbReference type="RefSeq" id="WP_011542179.1">
    <property type="nucleotide sequence ID" value="NC_008048.1"/>
</dbReference>
<dbReference type="SMR" id="Q1GRX1"/>
<dbReference type="STRING" id="317655.Sala_1889"/>
<dbReference type="KEGG" id="sal:Sala_1889"/>
<dbReference type="eggNOG" id="COG0275">
    <property type="taxonomic scope" value="Bacteria"/>
</dbReference>
<dbReference type="HOGENOM" id="CLU_038422_1_1_5"/>
<dbReference type="OrthoDB" id="9806637at2"/>
<dbReference type="Proteomes" id="UP000006578">
    <property type="component" value="Chromosome"/>
</dbReference>
<dbReference type="GO" id="GO:0005737">
    <property type="term" value="C:cytoplasm"/>
    <property type="evidence" value="ECO:0007669"/>
    <property type="project" value="UniProtKB-SubCell"/>
</dbReference>
<dbReference type="GO" id="GO:0071424">
    <property type="term" value="F:rRNA (cytosine-N4-)-methyltransferase activity"/>
    <property type="evidence" value="ECO:0007669"/>
    <property type="project" value="UniProtKB-UniRule"/>
</dbReference>
<dbReference type="GO" id="GO:0070475">
    <property type="term" value="P:rRNA base methylation"/>
    <property type="evidence" value="ECO:0007669"/>
    <property type="project" value="UniProtKB-UniRule"/>
</dbReference>
<dbReference type="CDD" id="cd02440">
    <property type="entry name" value="AdoMet_MTases"/>
    <property type="match status" value="1"/>
</dbReference>
<dbReference type="Gene3D" id="1.10.150.170">
    <property type="entry name" value="Putative methyltransferase TM0872, insert domain"/>
    <property type="match status" value="1"/>
</dbReference>
<dbReference type="Gene3D" id="3.40.50.150">
    <property type="entry name" value="Vaccinia Virus protein VP39"/>
    <property type="match status" value="1"/>
</dbReference>
<dbReference type="HAMAP" id="MF_01007">
    <property type="entry name" value="16SrRNA_methyltr_H"/>
    <property type="match status" value="1"/>
</dbReference>
<dbReference type="InterPro" id="IPR002903">
    <property type="entry name" value="RsmH"/>
</dbReference>
<dbReference type="InterPro" id="IPR023397">
    <property type="entry name" value="SAM-dep_MeTrfase_MraW_recog"/>
</dbReference>
<dbReference type="InterPro" id="IPR029063">
    <property type="entry name" value="SAM-dependent_MTases_sf"/>
</dbReference>
<dbReference type="NCBIfam" id="TIGR00006">
    <property type="entry name" value="16S rRNA (cytosine(1402)-N(4))-methyltransferase RsmH"/>
    <property type="match status" value="1"/>
</dbReference>
<dbReference type="PANTHER" id="PTHR11265:SF0">
    <property type="entry name" value="12S RRNA N4-METHYLCYTIDINE METHYLTRANSFERASE"/>
    <property type="match status" value="1"/>
</dbReference>
<dbReference type="PANTHER" id="PTHR11265">
    <property type="entry name" value="S-ADENOSYL-METHYLTRANSFERASE MRAW"/>
    <property type="match status" value="1"/>
</dbReference>
<dbReference type="Pfam" id="PF01795">
    <property type="entry name" value="Methyltransf_5"/>
    <property type="match status" value="1"/>
</dbReference>
<dbReference type="PIRSF" id="PIRSF004486">
    <property type="entry name" value="MraW"/>
    <property type="match status" value="1"/>
</dbReference>
<dbReference type="SUPFAM" id="SSF81799">
    <property type="entry name" value="Putative methyltransferase TM0872, insert domain"/>
    <property type="match status" value="1"/>
</dbReference>
<dbReference type="SUPFAM" id="SSF53335">
    <property type="entry name" value="S-adenosyl-L-methionine-dependent methyltransferases"/>
    <property type="match status" value="1"/>
</dbReference>
<keyword id="KW-0963">Cytoplasm</keyword>
<keyword id="KW-0489">Methyltransferase</keyword>
<keyword id="KW-1185">Reference proteome</keyword>
<keyword id="KW-0698">rRNA processing</keyword>
<keyword id="KW-0949">S-adenosyl-L-methionine</keyword>
<keyword id="KW-0808">Transferase</keyword>
<proteinExistence type="inferred from homology"/>
<organism>
    <name type="scientific">Sphingopyxis alaskensis (strain DSM 13593 / LMG 18877 / RB2256)</name>
    <name type="common">Sphingomonas alaskensis</name>
    <dbReference type="NCBI Taxonomy" id="317655"/>
    <lineage>
        <taxon>Bacteria</taxon>
        <taxon>Pseudomonadati</taxon>
        <taxon>Pseudomonadota</taxon>
        <taxon>Alphaproteobacteria</taxon>
        <taxon>Sphingomonadales</taxon>
        <taxon>Sphingomonadaceae</taxon>
        <taxon>Sphingopyxis</taxon>
    </lineage>
</organism>